<sequence length="265" mass="30176">MIKWPWKAQEITQNEDWPWDDALAIPLLVNLTAQEQARLIALAERFLQQKRLVALQGFELDSLKSARIALIFCLPILELGIEWLDGFHEVLIYPAPFVVDDEWEDDIGLVHSQRVVQAGQSWQQGPIILNWLDIQDSFDASGFNLIIHEVAHKLDMRNGDRASGIPFIPLRDVAGWEHDLHAAMNNIQDEIDLVGESAASIDAYAATDPAECFAVLSEYFFSAPELFAPRFPALWQRFCQFYRQDPSQRLRVSAAEGDYGEESEH</sequence>
<dbReference type="EC" id="3.4.11.-" evidence="1"/>
<dbReference type="EMBL" id="AM933173">
    <property type="protein sequence ID" value="CAR37844.1"/>
    <property type="molecule type" value="Genomic_DNA"/>
</dbReference>
<dbReference type="RefSeq" id="WP_000598915.1">
    <property type="nucleotide sequence ID" value="NC_011274.1"/>
</dbReference>
<dbReference type="SMR" id="B5RBG7"/>
<dbReference type="MEROPS" id="M90.001"/>
<dbReference type="KEGG" id="seg:SG1994"/>
<dbReference type="HOGENOM" id="CLU_063037_2_0_6"/>
<dbReference type="Proteomes" id="UP000008321">
    <property type="component" value="Chromosome"/>
</dbReference>
<dbReference type="GO" id="GO:0005829">
    <property type="term" value="C:cytosol"/>
    <property type="evidence" value="ECO:0007669"/>
    <property type="project" value="TreeGrafter"/>
</dbReference>
<dbReference type="GO" id="GO:0004177">
    <property type="term" value="F:aminopeptidase activity"/>
    <property type="evidence" value="ECO:0007669"/>
    <property type="project" value="UniProtKB-UniRule"/>
</dbReference>
<dbReference type="GO" id="GO:0008237">
    <property type="term" value="F:metallopeptidase activity"/>
    <property type="evidence" value="ECO:0007669"/>
    <property type="project" value="UniProtKB-UniRule"/>
</dbReference>
<dbReference type="GO" id="GO:0008270">
    <property type="term" value="F:zinc ion binding"/>
    <property type="evidence" value="ECO:0007669"/>
    <property type="project" value="UniProtKB-UniRule"/>
</dbReference>
<dbReference type="GO" id="GO:0006508">
    <property type="term" value="P:proteolysis"/>
    <property type="evidence" value="ECO:0007669"/>
    <property type="project" value="UniProtKB-KW"/>
</dbReference>
<dbReference type="CDD" id="cd20169">
    <property type="entry name" value="Peptidase_M90_mtfA"/>
    <property type="match status" value="1"/>
</dbReference>
<dbReference type="FunFam" id="1.10.472.150:FF:000001">
    <property type="entry name" value="Protein MtfA"/>
    <property type="match status" value="1"/>
</dbReference>
<dbReference type="FunFam" id="3.40.390.10:FF:000012">
    <property type="entry name" value="Protein MtfA"/>
    <property type="match status" value="1"/>
</dbReference>
<dbReference type="Gene3D" id="3.40.390.10">
    <property type="entry name" value="Collagenase (Catalytic Domain)"/>
    <property type="match status" value="1"/>
</dbReference>
<dbReference type="Gene3D" id="1.10.472.150">
    <property type="entry name" value="Glucose-regulated metallo-peptidase M90, N-terminal domain"/>
    <property type="match status" value="1"/>
</dbReference>
<dbReference type="HAMAP" id="MF_01593">
    <property type="entry name" value="MtfA"/>
    <property type="match status" value="1"/>
</dbReference>
<dbReference type="InterPro" id="IPR024079">
    <property type="entry name" value="MetalloPept_cat_dom_sf"/>
</dbReference>
<dbReference type="InterPro" id="IPR057256">
    <property type="entry name" value="MtfA_enterob"/>
</dbReference>
<dbReference type="InterPro" id="IPR010384">
    <property type="entry name" value="MtfA_fam"/>
</dbReference>
<dbReference type="InterPro" id="IPR042252">
    <property type="entry name" value="MtfA_N"/>
</dbReference>
<dbReference type="NCBIfam" id="NF011939">
    <property type="entry name" value="PRK15410.1"/>
    <property type="match status" value="1"/>
</dbReference>
<dbReference type="PANTHER" id="PTHR30164">
    <property type="entry name" value="MTFA PEPTIDASE"/>
    <property type="match status" value="1"/>
</dbReference>
<dbReference type="PANTHER" id="PTHR30164:SF2">
    <property type="entry name" value="PROTEIN MTFA"/>
    <property type="match status" value="1"/>
</dbReference>
<dbReference type="Pfam" id="PF06167">
    <property type="entry name" value="Peptidase_M90"/>
    <property type="match status" value="1"/>
</dbReference>
<dbReference type="SUPFAM" id="SSF55486">
    <property type="entry name" value="Metalloproteases ('zincins'), catalytic domain"/>
    <property type="match status" value="1"/>
</dbReference>
<name>MTFA_SALG2</name>
<evidence type="ECO:0000255" key="1">
    <source>
        <dbReference type="HAMAP-Rule" id="MF_01593"/>
    </source>
</evidence>
<proteinExistence type="inferred from homology"/>
<keyword id="KW-0031">Aminopeptidase</keyword>
<keyword id="KW-0963">Cytoplasm</keyword>
<keyword id="KW-0378">Hydrolase</keyword>
<keyword id="KW-0479">Metal-binding</keyword>
<keyword id="KW-0482">Metalloprotease</keyword>
<keyword id="KW-0645">Protease</keyword>
<keyword id="KW-0862">Zinc</keyword>
<reference key="1">
    <citation type="journal article" date="2008" name="Genome Res.">
        <title>Comparative genome analysis of Salmonella enteritidis PT4 and Salmonella gallinarum 287/91 provides insights into evolutionary and host adaptation pathways.</title>
        <authorList>
            <person name="Thomson N.R."/>
            <person name="Clayton D.J."/>
            <person name="Windhorst D."/>
            <person name="Vernikos G."/>
            <person name="Davidson S."/>
            <person name="Churcher C."/>
            <person name="Quail M.A."/>
            <person name="Stevens M."/>
            <person name="Jones M.A."/>
            <person name="Watson M."/>
            <person name="Barron A."/>
            <person name="Layton A."/>
            <person name="Pickard D."/>
            <person name="Kingsley R.A."/>
            <person name="Bignell A."/>
            <person name="Clark L."/>
            <person name="Harris B."/>
            <person name="Ormond D."/>
            <person name="Abdellah Z."/>
            <person name="Brooks K."/>
            <person name="Cherevach I."/>
            <person name="Chillingworth T."/>
            <person name="Woodward J."/>
            <person name="Norberczak H."/>
            <person name="Lord A."/>
            <person name="Arrowsmith C."/>
            <person name="Jagels K."/>
            <person name="Moule S."/>
            <person name="Mungall K."/>
            <person name="Saunders M."/>
            <person name="Whitehead S."/>
            <person name="Chabalgoity J.A."/>
            <person name="Maskell D."/>
            <person name="Humphreys T."/>
            <person name="Roberts M."/>
            <person name="Barrow P.A."/>
            <person name="Dougan G."/>
            <person name="Parkhill J."/>
        </authorList>
    </citation>
    <scope>NUCLEOTIDE SEQUENCE [LARGE SCALE GENOMIC DNA]</scope>
    <source>
        <strain>287/91 / NCTC 13346</strain>
    </source>
</reference>
<comment type="function">
    <text evidence="1">Involved in the modulation of the activity of the glucose-phosphotransferase system (glucose-PTS). Interacts with the transcriptional repressor Mlc, preventing its interaction with DNA and leading to the modulation of expression of genes regulated by Mlc, including ptsG, which encodes the PTS system glucose-specific EIICB component.</text>
</comment>
<comment type="function">
    <text evidence="1">Shows zinc-dependent metallopeptidase activity.</text>
</comment>
<comment type="cofactor">
    <cofactor evidence="1">
        <name>Zn(2+)</name>
        <dbReference type="ChEBI" id="CHEBI:29105"/>
    </cofactor>
    <text evidence="1">Binds 1 zinc ion per subunit.</text>
</comment>
<comment type="subunit">
    <text evidence="1">Interacts with Mlc.</text>
</comment>
<comment type="subcellular location">
    <subcellularLocation>
        <location evidence="1">Cytoplasm</location>
    </subcellularLocation>
</comment>
<comment type="similarity">
    <text evidence="1">Belongs to the MtfA family.</text>
</comment>
<feature type="chain" id="PRO_1000147844" description="Mlc titration factor A">
    <location>
        <begin position="1"/>
        <end position="265"/>
    </location>
</feature>
<feature type="binding site" evidence="1">
    <location>
        <position position="111"/>
    </location>
    <ligand>
        <name>Zn(2+)</name>
        <dbReference type="ChEBI" id="CHEBI:29105"/>
    </ligand>
</feature>
<feature type="binding site" evidence="1">
    <location>
        <position position="148"/>
    </location>
    <ligand>
        <name>Zn(2+)</name>
        <dbReference type="ChEBI" id="CHEBI:29105"/>
    </ligand>
</feature>
<feature type="binding site" evidence="1">
    <location>
        <position position="152"/>
    </location>
    <ligand>
        <name>Zn(2+)</name>
        <dbReference type="ChEBI" id="CHEBI:29105"/>
    </ligand>
</feature>
<feature type="binding site" evidence="1">
    <location>
        <position position="211"/>
    </location>
    <ligand>
        <name>Zn(2+)</name>
        <dbReference type="ChEBI" id="CHEBI:29105"/>
    </ligand>
</feature>
<protein>
    <recommendedName>
        <fullName evidence="1">Mlc titration factor A</fullName>
    </recommendedName>
    <alternativeName>
        <fullName evidence="1">Probable zinc metallopeptidase MtfA</fullName>
        <ecNumber evidence="1">3.4.11.-</ecNumber>
    </alternativeName>
</protein>
<organism>
    <name type="scientific">Salmonella gallinarum (strain 287/91 / NCTC 13346)</name>
    <dbReference type="NCBI Taxonomy" id="550538"/>
    <lineage>
        <taxon>Bacteria</taxon>
        <taxon>Pseudomonadati</taxon>
        <taxon>Pseudomonadota</taxon>
        <taxon>Gammaproteobacteria</taxon>
        <taxon>Enterobacterales</taxon>
        <taxon>Enterobacteriaceae</taxon>
        <taxon>Salmonella</taxon>
    </lineage>
</organism>
<gene>
    <name evidence="1" type="primary">mtfA</name>
    <name type="ordered locus">SG1994</name>
</gene>
<accession>B5RBG7</accession>